<comment type="function">
    <text evidence="1">RuBisCO catalyzes two reactions: the carboxylation of D-ribulose 1,5-bisphosphate, the primary event in carbon dioxide fixation, as well as the oxidative fragmentation of the pentose substrate. Both reactions occur simultaneously and in competition at the same active site.</text>
</comment>
<comment type="catalytic activity">
    <reaction evidence="1">
        <text>2 (2R)-3-phosphoglycerate + 2 H(+) = D-ribulose 1,5-bisphosphate + CO2 + H2O</text>
        <dbReference type="Rhea" id="RHEA:23124"/>
        <dbReference type="ChEBI" id="CHEBI:15377"/>
        <dbReference type="ChEBI" id="CHEBI:15378"/>
        <dbReference type="ChEBI" id="CHEBI:16526"/>
        <dbReference type="ChEBI" id="CHEBI:57870"/>
        <dbReference type="ChEBI" id="CHEBI:58272"/>
        <dbReference type="EC" id="4.1.1.39"/>
    </reaction>
</comment>
<comment type="catalytic activity">
    <reaction evidence="1">
        <text>D-ribulose 1,5-bisphosphate + O2 = 2-phosphoglycolate + (2R)-3-phosphoglycerate + 2 H(+)</text>
        <dbReference type="Rhea" id="RHEA:36631"/>
        <dbReference type="ChEBI" id="CHEBI:15378"/>
        <dbReference type="ChEBI" id="CHEBI:15379"/>
        <dbReference type="ChEBI" id="CHEBI:57870"/>
        <dbReference type="ChEBI" id="CHEBI:58033"/>
        <dbReference type="ChEBI" id="CHEBI:58272"/>
    </reaction>
</comment>
<comment type="cofactor">
    <cofactor evidence="1">
        <name>Mg(2+)</name>
        <dbReference type="ChEBI" id="CHEBI:18420"/>
    </cofactor>
    <text evidence="1">Binds 1 Mg(2+) ion per subunit.</text>
</comment>
<comment type="subunit">
    <text evidence="1">Heterohexadecamer of 8 large chains and 8 small chains.</text>
</comment>
<comment type="miscellaneous">
    <text evidence="1">The basic functional RuBisCO is composed of a large chain homodimer in a 'head-to-tail' conformation. In form I RuBisCO this homodimer is arranged in a barrel-like tetramer with the small subunits forming a tetrameric 'cap' on each end of the 'barrel'.</text>
</comment>
<comment type="similarity">
    <text evidence="1">Belongs to the RuBisCO large chain family. Type I subfamily.</text>
</comment>
<keyword id="KW-0113">Calvin cycle</keyword>
<keyword id="KW-0120">Carbon dioxide fixation</keyword>
<keyword id="KW-0456">Lyase</keyword>
<keyword id="KW-0460">Magnesium</keyword>
<keyword id="KW-0479">Metal-binding</keyword>
<keyword id="KW-0503">Monooxygenase</keyword>
<keyword id="KW-0560">Oxidoreductase</keyword>
<proteinExistence type="inferred from homology"/>
<organism>
    <name type="scientific">Nitrosomonas sp. (strain ENI-11)</name>
    <dbReference type="NCBI Taxonomy" id="100906"/>
    <lineage>
        <taxon>Bacteria</taxon>
        <taxon>Pseudomonadati</taxon>
        <taxon>Pseudomonadota</taxon>
        <taxon>Betaproteobacteria</taxon>
        <taxon>Nitrosomonadales</taxon>
        <taxon>Nitrosomonadaceae</taxon>
        <taxon>Nitrosomonas</taxon>
    </lineage>
</organism>
<dbReference type="EC" id="4.1.1.39" evidence="1"/>
<dbReference type="EMBL" id="AB061373">
    <property type="protein sequence ID" value="BAB71854.1"/>
    <property type="molecule type" value="Genomic_DNA"/>
</dbReference>
<dbReference type="SMR" id="Q8VW94"/>
<dbReference type="GO" id="GO:0000287">
    <property type="term" value="F:magnesium ion binding"/>
    <property type="evidence" value="ECO:0007669"/>
    <property type="project" value="UniProtKB-UniRule"/>
</dbReference>
<dbReference type="GO" id="GO:0004497">
    <property type="term" value="F:monooxygenase activity"/>
    <property type="evidence" value="ECO:0007669"/>
    <property type="project" value="UniProtKB-KW"/>
</dbReference>
<dbReference type="GO" id="GO:0016984">
    <property type="term" value="F:ribulose-bisphosphate carboxylase activity"/>
    <property type="evidence" value="ECO:0007669"/>
    <property type="project" value="UniProtKB-UniRule"/>
</dbReference>
<dbReference type="GO" id="GO:0019253">
    <property type="term" value="P:reductive pentose-phosphate cycle"/>
    <property type="evidence" value="ECO:0007669"/>
    <property type="project" value="UniProtKB-UniRule"/>
</dbReference>
<dbReference type="Gene3D" id="3.20.20.110">
    <property type="entry name" value="Ribulose bisphosphate carboxylase, large subunit, C-terminal domain"/>
    <property type="match status" value="1"/>
</dbReference>
<dbReference type="Gene3D" id="3.30.70.150">
    <property type="entry name" value="RuBisCO large subunit, N-terminal domain"/>
    <property type="match status" value="1"/>
</dbReference>
<dbReference type="HAMAP" id="MF_01338">
    <property type="entry name" value="RuBisCO_L_type1"/>
    <property type="match status" value="1"/>
</dbReference>
<dbReference type="InterPro" id="IPR033966">
    <property type="entry name" value="RuBisCO"/>
</dbReference>
<dbReference type="InterPro" id="IPR000685">
    <property type="entry name" value="RuBisCO_lsu_C"/>
</dbReference>
<dbReference type="InterPro" id="IPR036376">
    <property type="entry name" value="RuBisCO_lsu_C_sf"/>
</dbReference>
<dbReference type="InterPro" id="IPR017443">
    <property type="entry name" value="RuBisCO_lsu_fd_N"/>
</dbReference>
<dbReference type="InterPro" id="IPR036422">
    <property type="entry name" value="RuBisCO_lsu_N_sf"/>
</dbReference>
<dbReference type="InterPro" id="IPR020888">
    <property type="entry name" value="RuBisCO_lsuI"/>
</dbReference>
<dbReference type="NCBIfam" id="NF003252">
    <property type="entry name" value="PRK04208.1"/>
    <property type="match status" value="1"/>
</dbReference>
<dbReference type="PANTHER" id="PTHR42704">
    <property type="entry name" value="RIBULOSE BISPHOSPHATE CARBOXYLASE"/>
    <property type="match status" value="1"/>
</dbReference>
<dbReference type="PANTHER" id="PTHR42704:SF17">
    <property type="entry name" value="RIBULOSE BISPHOSPHATE CARBOXYLASE LARGE CHAIN"/>
    <property type="match status" value="1"/>
</dbReference>
<dbReference type="Pfam" id="PF00016">
    <property type="entry name" value="RuBisCO_large"/>
    <property type="match status" value="1"/>
</dbReference>
<dbReference type="Pfam" id="PF02788">
    <property type="entry name" value="RuBisCO_large_N"/>
    <property type="match status" value="1"/>
</dbReference>
<dbReference type="SFLD" id="SFLDG01052">
    <property type="entry name" value="RuBisCO"/>
    <property type="match status" value="1"/>
</dbReference>
<dbReference type="SFLD" id="SFLDS00014">
    <property type="entry name" value="RuBisCO"/>
    <property type="match status" value="1"/>
</dbReference>
<dbReference type="SFLD" id="SFLDG00301">
    <property type="entry name" value="RuBisCO-like_proteins"/>
    <property type="match status" value="1"/>
</dbReference>
<dbReference type="SUPFAM" id="SSF51649">
    <property type="entry name" value="RuBisCo, C-terminal domain"/>
    <property type="match status" value="1"/>
</dbReference>
<dbReference type="SUPFAM" id="SSF54966">
    <property type="entry name" value="RuBisCO, large subunit, small (N-terminal) domain"/>
    <property type="match status" value="1"/>
</dbReference>
<feature type="chain" id="PRO_0000062630" description="Ribulose bisphosphate carboxylase large chain">
    <location>
        <begin position="1"/>
        <end position="473"/>
    </location>
</feature>
<feature type="active site" description="Proton acceptor" evidence="1">
    <location>
        <position position="168"/>
    </location>
</feature>
<feature type="active site" description="Proton acceptor" evidence="1">
    <location>
        <position position="287"/>
    </location>
</feature>
<feature type="binding site" description="in homodimeric partner" evidence="1">
    <location>
        <position position="116"/>
    </location>
    <ligand>
        <name>substrate</name>
    </ligand>
</feature>
<feature type="binding site" evidence="1">
    <location>
        <position position="166"/>
    </location>
    <ligand>
        <name>substrate</name>
    </ligand>
</feature>
<feature type="binding site" evidence="1">
    <location>
        <position position="170"/>
    </location>
    <ligand>
        <name>substrate</name>
    </ligand>
</feature>
<feature type="binding site" description="via carbamate group" evidence="1">
    <location>
        <position position="194"/>
    </location>
    <ligand>
        <name>Mg(2+)</name>
        <dbReference type="ChEBI" id="CHEBI:18420"/>
    </ligand>
</feature>
<feature type="binding site" evidence="1">
    <location>
        <position position="196"/>
    </location>
    <ligand>
        <name>Mg(2+)</name>
        <dbReference type="ChEBI" id="CHEBI:18420"/>
    </ligand>
</feature>
<feature type="binding site" evidence="1">
    <location>
        <position position="197"/>
    </location>
    <ligand>
        <name>Mg(2+)</name>
        <dbReference type="ChEBI" id="CHEBI:18420"/>
    </ligand>
</feature>
<feature type="binding site" evidence="1">
    <location>
        <position position="288"/>
    </location>
    <ligand>
        <name>substrate</name>
    </ligand>
</feature>
<feature type="binding site" evidence="1">
    <location>
        <position position="320"/>
    </location>
    <ligand>
        <name>substrate</name>
    </ligand>
</feature>
<feature type="binding site" evidence="1">
    <location>
        <position position="372"/>
    </location>
    <ligand>
        <name>substrate</name>
    </ligand>
</feature>
<feature type="site" description="Transition state stabilizer" evidence="1">
    <location>
        <position position="327"/>
    </location>
</feature>
<feature type="modified residue" description="N6-carboxylysine" evidence="1">
    <location>
        <position position="194"/>
    </location>
</feature>
<protein>
    <recommendedName>
        <fullName evidence="1">Ribulose bisphosphate carboxylase large chain</fullName>
        <shortName evidence="1">RuBisCO large subunit</shortName>
        <ecNumber evidence="1">4.1.1.39</ecNumber>
    </recommendedName>
</protein>
<accession>Q8VW94</accession>
<gene>
    <name evidence="1" type="primary">cbbL</name>
</gene>
<sequence>MASKTYQAGVKEYRQTYWQPDYVPLDTDILACFKITPQAGVDREEAAAAVAAESSTGTWTTVWTDLLTDMDYYKGRAYRIEDVPGDDACFYAFIAYPIDLFEEGSVVNVFTSLVGNVFGFKAIRALRLEDVRFPIAYVKTCGGPPSGIQVERDKMNKYGRPLLGCTIKPKLGLSAKNYGRAVYECLRGSLDFTKDDENINSQPFMRWRDRFEFVQEATLKAEAETGERKGHYLNVTAPTPEEMYKRAEFAKEIGAPIIMHDYLAGGLCANAGLANWCRNNGMLLHVHRAMHAVLDRNPHHGIHFRVLTKILRLSGGDHLHTGTVVGKLEGDRASTLGWIDLLRESFVPEDRSRGIFFDQDWGSMPGAFAVASGGIHVWHMPALVAIFGDDSVLQFGGGTLGHPWGNAAGAHANRVALEACVQARNEGRQIEKEGREILTAAAQHSPELKIAMETWKEIKFEFDTVDKLDIAHK</sequence>
<name>RBL_NITS1</name>
<evidence type="ECO:0000255" key="1">
    <source>
        <dbReference type="HAMAP-Rule" id="MF_01338"/>
    </source>
</evidence>
<reference key="1">
    <citation type="journal article" date="2002" name="Biosci. Biotechnol. Biochem.">
        <title>Isolation and characterization of cbbL and cbbS genes encoding form I ribulose-1,5-bisphosphate carboxylase/oxygenase large and small subunits in Nitrosomonas sp. strain ENI-11.</title>
        <authorList>
            <person name="Hirota R."/>
            <person name="Kato J."/>
            <person name="Morita H."/>
            <person name="Kuroda A."/>
            <person name="Ikeda T."/>
            <person name="Takiguchi N."/>
            <person name="Ohtake H."/>
        </authorList>
    </citation>
    <scope>NUCLEOTIDE SEQUENCE [GENOMIC DNA]</scope>
</reference>